<keyword id="KW-0024">Alternative initiation</keyword>
<keyword id="KW-0963">Cytoplasm</keyword>
<keyword id="KW-0217">Developmental protein</keyword>
<keyword id="KW-0443">Lipid metabolism</keyword>
<keyword id="KW-0496">Mitochondrion</keyword>
<keyword id="KW-0560">Oxidoreductase</keyword>
<keyword id="KW-0575">Peroxidase</keyword>
<keyword id="KW-0597">Phosphoprotein</keyword>
<keyword id="KW-1185">Reference proteome</keyword>
<keyword id="KW-0712">Selenocysteine</keyword>
<keyword id="KW-0809">Transit peptide</keyword>
<proteinExistence type="evidence at transcript level"/>
<accession>Q32QL6</accession>
<organism>
    <name type="scientific">Callithrix jacchus</name>
    <name type="common">White-tufted-ear marmoset</name>
    <dbReference type="NCBI Taxonomy" id="9483"/>
    <lineage>
        <taxon>Eukaryota</taxon>
        <taxon>Metazoa</taxon>
        <taxon>Chordata</taxon>
        <taxon>Craniata</taxon>
        <taxon>Vertebrata</taxon>
        <taxon>Euteleostomi</taxon>
        <taxon>Mammalia</taxon>
        <taxon>Eutheria</taxon>
        <taxon>Euarchontoglires</taxon>
        <taxon>Primates</taxon>
        <taxon>Haplorrhini</taxon>
        <taxon>Platyrrhini</taxon>
        <taxon>Cebidae</taxon>
        <taxon>Callitrichinae</taxon>
        <taxon>Callithrix</taxon>
        <taxon>Callithrix</taxon>
    </lineage>
</organism>
<reference key="1">
    <citation type="journal article" date="2006" name="J. Med. Primatol.">
        <title>Marmoset glutathione peroxidases: cDNA sequences, molecular evolution, and gene expression.</title>
        <authorList>
            <person name="Atanasova S."/>
            <person name="von Ahsen N."/>
            <person name="Schlumbohm C."/>
            <person name="Wieland E."/>
            <person name="Oellerich M."/>
            <person name="Armstrong V."/>
        </authorList>
    </citation>
    <scope>NUCLEOTIDE SEQUENCE [MRNA]</scope>
    <scope>TISSUE SPECIFICITY</scope>
    <source>
        <tissue>Liver</tissue>
    </source>
</reference>
<protein>
    <recommendedName>
        <fullName evidence="1">Phospholipid hydroperoxide glutathione peroxidase</fullName>
        <shortName evidence="1">PHGPx</shortName>
        <ecNumber evidence="1">1.11.1.12</ecNumber>
    </recommendedName>
    <alternativeName>
        <fullName evidence="1">Glutathione peroxidase 4</fullName>
        <shortName evidence="1">GPx-4</shortName>
        <shortName evidence="1">GSHPx-4</shortName>
        <ecNumber evidence="3">1.11.1.9</ecNumber>
    </alternativeName>
</protein>
<evidence type="ECO:0000250" key="1">
    <source>
        <dbReference type="UniProtKB" id="O70325"/>
    </source>
</evidence>
<evidence type="ECO:0000250" key="2">
    <source>
        <dbReference type="UniProtKB" id="P36968"/>
    </source>
</evidence>
<evidence type="ECO:0000250" key="3">
    <source>
        <dbReference type="UniProtKB" id="P36969"/>
    </source>
</evidence>
<evidence type="ECO:0000250" key="4">
    <source>
        <dbReference type="UniProtKB" id="P36970"/>
    </source>
</evidence>
<evidence type="ECO:0000255" key="5"/>
<evidence type="ECO:0000269" key="6">
    <source>
    </source>
</evidence>
<evidence type="ECO:0000305" key="7"/>
<gene>
    <name evidence="1" type="primary">GPX4</name>
</gene>
<comment type="function">
    <text evidence="1 2 3">Essential antioxidant peroxidase that directly reduces phospholipid hydroperoxide even if they are incorporated in membranes and lipoproteins (By similarity). Can also reduce fatty acid hydroperoxide, cholesterol hydroperoxide and thymine hydroperoxide (By similarity). Plays a key role in protecting cells from oxidative damage by preventing membrane lipid peroxidation (By similarity). Required to prevent cells from ferroptosis, a non-apoptotic cell death resulting from an iron-dependent accumulation of lipid reactive oxygen species (By similarity). The presence of selenocysteine (Sec) versus Cys at the active site is essential for life: it provides resistance to overoxidation and prevents cells against ferroptosis (By similarity). The presence of Sec at the active site is also essential for the survival of a specific type of parvalbumin-positive interneurons, thereby preventing against fatal epileptic seizures (By similarity). May be required to protect cells from the toxicity of ingested lipid hydroperoxides (By similarity). Required for normal sperm development and male fertility (By similarity). Essential for maturation and survival of photoreceptor cells (By similarity). Plays a role in a primary T-cell response to viral and parasitic infection by protecting T-cells from ferroptosis and by supporting T-cell expansion (By similarity). Plays a role of glutathione peroxidase in platelets in the arachidonic acid metabolism (By similarity). Reduces hydroperoxy ester lipids formed by a 15-lipoxygenase that may play a role as down-regulator of the cellular 15-lipoxygenase pathway (By similarity). Can also reduce small soluble hydroperoxides such as H2O2, cumene hydroperoxide and tert-butyl hydroperoxide (By similarity).</text>
</comment>
<comment type="catalytic activity">
    <reaction evidence="2">
        <text>a hydroperoxy polyunsaturated fatty acid + 2 glutathione = a hydroxy polyunsaturated fatty acid + glutathione disulfide + H2O</text>
        <dbReference type="Rhea" id="RHEA:19057"/>
        <dbReference type="ChEBI" id="CHEBI:15377"/>
        <dbReference type="ChEBI" id="CHEBI:57925"/>
        <dbReference type="ChEBI" id="CHEBI:58297"/>
        <dbReference type="ChEBI" id="CHEBI:131871"/>
        <dbReference type="ChEBI" id="CHEBI:134019"/>
        <dbReference type="EC" id="1.11.1.12"/>
    </reaction>
    <physiologicalReaction direction="left-to-right" evidence="2">
        <dbReference type="Rhea" id="RHEA:19058"/>
    </physiologicalReaction>
</comment>
<comment type="catalytic activity">
    <reaction evidence="3">
        <text>2 glutathione + H2O2 = glutathione disulfide + 2 H2O</text>
        <dbReference type="Rhea" id="RHEA:16833"/>
        <dbReference type="ChEBI" id="CHEBI:15377"/>
        <dbReference type="ChEBI" id="CHEBI:16240"/>
        <dbReference type="ChEBI" id="CHEBI:57925"/>
        <dbReference type="ChEBI" id="CHEBI:58297"/>
        <dbReference type="EC" id="1.11.1.9"/>
    </reaction>
    <physiologicalReaction direction="left-to-right" evidence="3">
        <dbReference type="Rhea" id="RHEA:16834"/>
    </physiologicalReaction>
</comment>
<comment type="catalytic activity">
    <reaction evidence="3">
        <text>tert-butyl hydroperoxide + 2 glutathione = tert-butanol + glutathione disulfide + H2O</text>
        <dbReference type="Rhea" id="RHEA:69412"/>
        <dbReference type="ChEBI" id="CHEBI:15377"/>
        <dbReference type="ChEBI" id="CHEBI:45895"/>
        <dbReference type="ChEBI" id="CHEBI:57925"/>
        <dbReference type="ChEBI" id="CHEBI:58297"/>
        <dbReference type="ChEBI" id="CHEBI:64090"/>
    </reaction>
    <physiologicalReaction direction="left-to-right" evidence="3">
        <dbReference type="Rhea" id="RHEA:69413"/>
    </physiologicalReaction>
</comment>
<comment type="catalytic activity">
    <reaction evidence="3">
        <text>cumene hydroperoxide + 2 glutathione = 2-phenylpropan-2-ol + glutathione disulfide + H2O</text>
        <dbReference type="Rhea" id="RHEA:69651"/>
        <dbReference type="ChEBI" id="CHEBI:15377"/>
        <dbReference type="ChEBI" id="CHEBI:57925"/>
        <dbReference type="ChEBI" id="CHEBI:58297"/>
        <dbReference type="ChEBI" id="CHEBI:78673"/>
        <dbReference type="ChEBI" id="CHEBI:131607"/>
    </reaction>
    <physiologicalReaction direction="left-to-right" evidence="3">
        <dbReference type="Rhea" id="RHEA:69652"/>
    </physiologicalReaction>
</comment>
<comment type="catalytic activity">
    <reaction evidence="3">
        <text>(9S)-hydroperoxy-(10E,12Z)-octadecadienoate + 2 glutathione = (9S)-hydroxy-(10E,12Z)-octadecadienoate + glutathione disulfide + H2O</text>
        <dbReference type="Rhea" id="RHEA:76687"/>
        <dbReference type="ChEBI" id="CHEBI:15377"/>
        <dbReference type="ChEBI" id="CHEBI:57925"/>
        <dbReference type="ChEBI" id="CHEBI:58297"/>
        <dbReference type="ChEBI" id="CHEBI:60955"/>
        <dbReference type="ChEBI" id="CHEBI:77852"/>
    </reaction>
    <physiologicalReaction direction="left-to-right" evidence="3">
        <dbReference type="Rhea" id="RHEA:76688"/>
    </physiologicalReaction>
</comment>
<comment type="catalytic activity">
    <reaction evidence="3">
        <text>(13S)-hydroperoxy-(9Z,11E)-octadecadienoate + 2 glutathione = (13S)-hydroxy-(9Z,11E)-octadecadienoate + glutathione disulfide + H2O</text>
        <dbReference type="Rhea" id="RHEA:48888"/>
        <dbReference type="ChEBI" id="CHEBI:15377"/>
        <dbReference type="ChEBI" id="CHEBI:57466"/>
        <dbReference type="ChEBI" id="CHEBI:57925"/>
        <dbReference type="ChEBI" id="CHEBI:58297"/>
        <dbReference type="ChEBI" id="CHEBI:90850"/>
    </reaction>
    <physiologicalReaction direction="left-to-right" evidence="3">
        <dbReference type="Rhea" id="RHEA:48889"/>
    </physiologicalReaction>
</comment>
<comment type="catalytic activity">
    <reaction evidence="3">
        <text>(5S)-hydroperoxy-(6E,8Z,11Z,14Z)-eicosatetraenoate + 2 glutathione = (5S)-hydroxy-(6E,8Z,11Z,14Z)-eicosatetraenoate + glutathione disulfide + H2O</text>
        <dbReference type="Rhea" id="RHEA:48620"/>
        <dbReference type="ChEBI" id="CHEBI:15377"/>
        <dbReference type="ChEBI" id="CHEBI:57450"/>
        <dbReference type="ChEBI" id="CHEBI:57925"/>
        <dbReference type="ChEBI" id="CHEBI:58297"/>
        <dbReference type="ChEBI" id="CHEBI:90632"/>
    </reaction>
    <physiologicalReaction direction="left-to-right" evidence="3">
        <dbReference type="Rhea" id="RHEA:48621"/>
    </physiologicalReaction>
</comment>
<comment type="catalytic activity">
    <reaction evidence="3">
        <text>(12R)-hydroperoxy-(5Z,8Z,10E,14Z)-eicosatetraenoate + 2 glutathione = (12R)-hydroxy-(5Z,8Z,10E,14Z)-eicosatetraenoate + glutathione disulfide + H2O</text>
        <dbReference type="Rhea" id="RHEA:76691"/>
        <dbReference type="ChEBI" id="CHEBI:15377"/>
        <dbReference type="ChEBI" id="CHEBI:57925"/>
        <dbReference type="ChEBI" id="CHEBI:58297"/>
        <dbReference type="ChEBI" id="CHEBI:75230"/>
        <dbReference type="ChEBI" id="CHEBI:83343"/>
    </reaction>
    <physiologicalReaction direction="left-to-right" evidence="3">
        <dbReference type="Rhea" id="RHEA:76692"/>
    </physiologicalReaction>
</comment>
<comment type="catalytic activity">
    <reaction evidence="3">
        <text>(12S)-hydroperoxy-(5Z,8Z,10E,14Z)-eicosatetraenoate + 2 glutathione = (12S)-hydroxy-(5Z,8Z,10E,14Z)-eicosatetraenoate + glutathione disulfide + H2O</text>
        <dbReference type="Rhea" id="RHEA:50708"/>
        <dbReference type="ChEBI" id="CHEBI:15377"/>
        <dbReference type="ChEBI" id="CHEBI:57444"/>
        <dbReference type="ChEBI" id="CHEBI:57925"/>
        <dbReference type="ChEBI" id="CHEBI:58297"/>
        <dbReference type="ChEBI" id="CHEBI:90680"/>
    </reaction>
    <physiologicalReaction direction="left-to-right" evidence="3">
        <dbReference type="Rhea" id="RHEA:50709"/>
    </physiologicalReaction>
</comment>
<comment type="catalytic activity">
    <reaction evidence="3">
        <text>(15S)-hydroperoxy-(5Z,8Z,11Z,13E)-eicosatetraenoate + 2 glutathione = (15S)-hydroxy-(5Z,8Z,11Z,13E)-eicosatetraenoate + glutathione disulfide + H2O</text>
        <dbReference type="Rhea" id="RHEA:76695"/>
        <dbReference type="ChEBI" id="CHEBI:15377"/>
        <dbReference type="ChEBI" id="CHEBI:57409"/>
        <dbReference type="ChEBI" id="CHEBI:57446"/>
        <dbReference type="ChEBI" id="CHEBI:57925"/>
        <dbReference type="ChEBI" id="CHEBI:58297"/>
    </reaction>
    <physiologicalReaction direction="left-to-right" evidence="3">
        <dbReference type="Rhea" id="RHEA:76696"/>
    </physiologicalReaction>
</comment>
<comment type="catalytic activity">
    <reaction evidence="3">
        <text>(5S)-hydroperoxy-(6E,8Z,11Z,14Z,17Z)-eicosapentaenoate + 2 glutathione = (5S)-hydroxy-(6E,8Z,11Z,14Z,17Z)-eicosapentaenoate + glutathione disulfide + H2O</text>
        <dbReference type="Rhea" id="RHEA:76699"/>
        <dbReference type="ChEBI" id="CHEBI:15377"/>
        <dbReference type="ChEBI" id="CHEBI:57925"/>
        <dbReference type="ChEBI" id="CHEBI:58297"/>
        <dbReference type="ChEBI" id="CHEBI:195399"/>
        <dbReference type="ChEBI" id="CHEBI:195400"/>
    </reaction>
    <physiologicalReaction direction="left-to-right" evidence="3">
        <dbReference type="Rhea" id="RHEA:76700"/>
    </physiologicalReaction>
</comment>
<comment type="catalytic activity">
    <reaction evidence="3">
        <text>(12S)-hydroperoxy-(5Z,8Z,10E,14Z,17Z)-eicosapentaenoate + 2 glutathione = (12S)-hydroxy-(5Z,8Z,10E,14Z,17Z)-eicosapentaenoate + glutathione disulfide + H2O</text>
        <dbReference type="Rhea" id="RHEA:76703"/>
        <dbReference type="ChEBI" id="CHEBI:15377"/>
        <dbReference type="ChEBI" id="CHEBI:57925"/>
        <dbReference type="ChEBI" id="CHEBI:58297"/>
        <dbReference type="ChEBI" id="CHEBI:90772"/>
        <dbReference type="ChEBI" id="CHEBI:195401"/>
    </reaction>
    <physiologicalReaction direction="left-to-right" evidence="3">
        <dbReference type="Rhea" id="RHEA:76704"/>
    </physiologicalReaction>
</comment>
<comment type="catalytic activity">
    <reaction evidence="3">
        <text>(15S)-hydroperoxy-(5Z,8Z,11Z,13E,17Z)-eicosapentaenoate + 2 glutathione = (15S)-hydroxy-(5Z,8Z,11Z,13E,17Z)-eicosapentaenoate + glutathione disulfide + H2O</text>
        <dbReference type="Rhea" id="RHEA:76707"/>
        <dbReference type="ChEBI" id="CHEBI:15377"/>
        <dbReference type="ChEBI" id="CHEBI:57925"/>
        <dbReference type="ChEBI" id="CHEBI:58297"/>
        <dbReference type="ChEBI" id="CHEBI:132087"/>
        <dbReference type="ChEBI" id="CHEBI:194369"/>
    </reaction>
    <physiologicalReaction direction="left-to-right" evidence="3">
        <dbReference type="Rhea" id="RHEA:76708"/>
    </physiologicalReaction>
</comment>
<comment type="catalytic activity">
    <reaction evidence="3">
        <text>(15S)-hydroperoxy-(11Z,13E)-eicosadienoate + 2 glutathione = (15S)-hydroxy-(11Z,13E)-eicosadienoate + glutathione disulfide + H2O</text>
        <dbReference type="Rhea" id="RHEA:76711"/>
        <dbReference type="ChEBI" id="CHEBI:15377"/>
        <dbReference type="ChEBI" id="CHEBI:57925"/>
        <dbReference type="ChEBI" id="CHEBI:58297"/>
        <dbReference type="ChEBI" id="CHEBI:144832"/>
        <dbReference type="ChEBI" id="CHEBI:195402"/>
    </reaction>
    <physiologicalReaction direction="left-to-right" evidence="3">
        <dbReference type="Rhea" id="RHEA:76712"/>
    </physiologicalReaction>
</comment>
<comment type="catalytic activity">
    <reaction evidence="3">
        <text>(17S)-hydroperoxy-(4Z,7Z,10Z,13Z,15E,19Z)-docosahexaenoate + 2 glutathione = (17S)-hydroxy-(4Z,7Z,10Z,13Z,15E,19Z)-docosahexaenoate + glutathione disulfide + H2O</text>
        <dbReference type="Rhea" id="RHEA:76715"/>
        <dbReference type="ChEBI" id="CHEBI:15377"/>
        <dbReference type="ChEBI" id="CHEBI:57925"/>
        <dbReference type="ChEBI" id="CHEBI:58297"/>
        <dbReference type="ChEBI" id="CHEBI:133795"/>
        <dbReference type="ChEBI" id="CHEBI:195403"/>
    </reaction>
    <physiologicalReaction direction="left-to-right" evidence="3">
        <dbReference type="Rhea" id="RHEA:76716"/>
    </physiologicalReaction>
</comment>
<comment type="catalytic activity">
    <reaction evidence="3">
        <text>a hydroperoxy-1,2-diacyl-glycero-3-phosphocholine + 2 glutathione = a hydroxy-1,2-diacyl-glycero-3-phosphocholine + glutathione disulfide + H2O</text>
        <dbReference type="Rhea" id="RHEA:76731"/>
        <dbReference type="ChEBI" id="CHEBI:15377"/>
        <dbReference type="ChEBI" id="CHEBI:57925"/>
        <dbReference type="ChEBI" id="CHEBI:58297"/>
        <dbReference type="ChEBI" id="CHEBI:195423"/>
        <dbReference type="ChEBI" id="CHEBI:195424"/>
    </reaction>
    <physiologicalReaction direction="left-to-right" evidence="3">
        <dbReference type="Rhea" id="RHEA:76732"/>
    </physiologicalReaction>
</comment>
<comment type="subunit">
    <text evidence="3">Monomer. Has a tendency to form higher mass oligomers. Interacts with FUNDC1; this interaction promotes GPX4 recruitment into mitochondria through TOM/TIM complex where it is degraded by mitophagy.</text>
</comment>
<comment type="subcellular location">
    <molecule>Isoform Mitochondrial</molecule>
    <subcellularLocation>
        <location evidence="1">Mitochondrion</location>
    </subcellularLocation>
</comment>
<comment type="subcellular location">
    <molecule>Isoform Cytoplasmic</molecule>
    <subcellularLocation>
        <location evidence="1">Cytoplasm</location>
    </subcellularLocation>
</comment>
<comment type="alternative products">
    <event type="alternative initiation"/>
    <isoform>
        <id>Q32QL6-1</id>
        <name>Mitochondrial</name>
        <sequence type="displayed"/>
    </isoform>
    <isoform>
        <id>Q32QL6-2</id>
        <name>Cytoplasmic</name>
        <sequence type="described" ref="VSP_031257"/>
    </isoform>
</comment>
<comment type="tissue specificity">
    <text evidence="6">Expressed in testis. Also expressed in liver, lung, kidney and spinal cord.</text>
</comment>
<comment type="similarity">
    <text evidence="7">Belongs to the glutathione peroxidase family.</text>
</comment>
<dbReference type="EC" id="1.11.1.12" evidence="1"/>
<dbReference type="EC" id="1.11.1.9" evidence="3"/>
<dbReference type="EMBL" id="AY966404">
    <property type="protein sequence ID" value="AAY33855.1"/>
    <property type="molecule type" value="mRNA"/>
</dbReference>
<dbReference type="RefSeq" id="XP_017823036.1">
    <molecule id="Q32QL6-1"/>
    <property type="nucleotide sequence ID" value="XM_017967547.3"/>
</dbReference>
<dbReference type="RefSeq" id="XP_017823920.1">
    <property type="nucleotide sequence ID" value="XM_017968431.1"/>
</dbReference>
<dbReference type="FunCoup" id="Q32QL6">
    <property type="interactions" value="1543"/>
</dbReference>
<dbReference type="STRING" id="9483.ENSCJAP00000055947"/>
<dbReference type="Ensembl" id="ENSCJAT00000085701.3">
    <molecule id="Q32QL6-1"/>
    <property type="protein sequence ID" value="ENSCJAP00000055947.3"/>
    <property type="gene ID" value="ENSCJAG00000042573.3"/>
</dbReference>
<dbReference type="GeneID" id="100391793"/>
<dbReference type="KEGG" id="cjc:100391793"/>
<dbReference type="CTD" id="2879"/>
<dbReference type="GeneTree" id="ENSGT00940000161913"/>
<dbReference type="InParanoid" id="Q32QL6"/>
<dbReference type="OMA" id="TFPMTEK"/>
<dbReference type="OrthoDB" id="446890at2759"/>
<dbReference type="Proteomes" id="UP000008225">
    <property type="component" value="Chromosome 22"/>
</dbReference>
<dbReference type="GO" id="GO:0005829">
    <property type="term" value="C:cytosol"/>
    <property type="evidence" value="ECO:0000250"/>
    <property type="project" value="UniProtKB"/>
</dbReference>
<dbReference type="GO" id="GO:0005739">
    <property type="term" value="C:mitochondrion"/>
    <property type="evidence" value="ECO:0007669"/>
    <property type="project" value="UniProtKB-SubCell"/>
</dbReference>
<dbReference type="GO" id="GO:0005635">
    <property type="term" value="C:nuclear envelope"/>
    <property type="evidence" value="ECO:0007669"/>
    <property type="project" value="Ensembl"/>
</dbReference>
<dbReference type="GO" id="GO:0032991">
    <property type="term" value="C:protein-containing complex"/>
    <property type="evidence" value="ECO:0007669"/>
    <property type="project" value="Ensembl"/>
</dbReference>
<dbReference type="GO" id="GO:0004602">
    <property type="term" value="F:glutathione peroxidase activity"/>
    <property type="evidence" value="ECO:0000250"/>
    <property type="project" value="UniProtKB"/>
</dbReference>
<dbReference type="GO" id="GO:0042802">
    <property type="term" value="F:identical protein binding"/>
    <property type="evidence" value="ECO:0007669"/>
    <property type="project" value="Ensembl"/>
</dbReference>
<dbReference type="GO" id="GO:0047066">
    <property type="term" value="F:phospholipid-hydroperoxide glutathione peroxidase activity"/>
    <property type="evidence" value="ECO:0000250"/>
    <property type="project" value="UniProtKB"/>
</dbReference>
<dbReference type="GO" id="GO:0006915">
    <property type="term" value="P:apoptotic process"/>
    <property type="evidence" value="ECO:0007669"/>
    <property type="project" value="Ensembl"/>
</dbReference>
<dbReference type="GO" id="GO:0019369">
    <property type="term" value="P:arachidonate metabolic process"/>
    <property type="evidence" value="ECO:0000250"/>
    <property type="project" value="UniProtKB"/>
</dbReference>
<dbReference type="GO" id="GO:0021549">
    <property type="term" value="P:cerebellum development"/>
    <property type="evidence" value="ECO:0007669"/>
    <property type="project" value="Ensembl"/>
</dbReference>
<dbReference type="GO" id="GO:0006325">
    <property type="term" value="P:chromatin organization"/>
    <property type="evidence" value="ECO:0007669"/>
    <property type="project" value="Ensembl"/>
</dbReference>
<dbReference type="GO" id="GO:0016358">
    <property type="term" value="P:dendrite development"/>
    <property type="evidence" value="ECO:0007669"/>
    <property type="project" value="Ensembl"/>
</dbReference>
<dbReference type="GO" id="GO:0019372">
    <property type="term" value="P:lipoxygenase pathway"/>
    <property type="evidence" value="ECO:0000250"/>
    <property type="project" value="UniProtKB"/>
</dbReference>
<dbReference type="GO" id="GO:0035264">
    <property type="term" value="P:multicellular organism growth"/>
    <property type="evidence" value="ECO:0007669"/>
    <property type="project" value="Ensembl"/>
</dbReference>
<dbReference type="GO" id="GO:0110076">
    <property type="term" value="P:negative regulation of ferroptosis"/>
    <property type="evidence" value="ECO:0000250"/>
    <property type="project" value="UniProtKB"/>
</dbReference>
<dbReference type="GO" id="GO:0051258">
    <property type="term" value="P:protein polymerization"/>
    <property type="evidence" value="ECO:0007669"/>
    <property type="project" value="Ensembl"/>
</dbReference>
<dbReference type="GO" id="GO:0032496">
    <property type="term" value="P:response to lipopolysaccharide"/>
    <property type="evidence" value="ECO:0007669"/>
    <property type="project" value="Ensembl"/>
</dbReference>
<dbReference type="GO" id="GO:0006979">
    <property type="term" value="P:response to oxidative stress"/>
    <property type="evidence" value="ECO:0000250"/>
    <property type="project" value="UniProtKB"/>
</dbReference>
<dbReference type="GO" id="GO:0007283">
    <property type="term" value="P:spermatogenesis"/>
    <property type="evidence" value="ECO:0000250"/>
    <property type="project" value="UniProtKB"/>
</dbReference>
<dbReference type="CDD" id="cd00340">
    <property type="entry name" value="GSH_Peroxidase"/>
    <property type="match status" value="1"/>
</dbReference>
<dbReference type="FunFam" id="3.40.30.10:FF:000111">
    <property type="entry name" value="Glutathione peroxidase"/>
    <property type="match status" value="1"/>
</dbReference>
<dbReference type="Gene3D" id="3.40.30.10">
    <property type="entry name" value="Glutaredoxin"/>
    <property type="match status" value="1"/>
</dbReference>
<dbReference type="InterPro" id="IPR000889">
    <property type="entry name" value="Glutathione_peroxidase"/>
</dbReference>
<dbReference type="InterPro" id="IPR029759">
    <property type="entry name" value="GPX_AS"/>
</dbReference>
<dbReference type="InterPro" id="IPR029760">
    <property type="entry name" value="GPX_CS"/>
</dbReference>
<dbReference type="InterPro" id="IPR036249">
    <property type="entry name" value="Thioredoxin-like_sf"/>
</dbReference>
<dbReference type="PANTHER" id="PTHR11592">
    <property type="entry name" value="GLUTATHIONE PEROXIDASE"/>
    <property type="match status" value="1"/>
</dbReference>
<dbReference type="PANTHER" id="PTHR11592:SF134">
    <property type="entry name" value="PHOSPHOLIPID HYDROPEROXIDE GLUTATHIONE PEROXIDASE"/>
    <property type="match status" value="1"/>
</dbReference>
<dbReference type="Pfam" id="PF00255">
    <property type="entry name" value="GSHPx"/>
    <property type="match status" value="1"/>
</dbReference>
<dbReference type="PIRSF" id="PIRSF000303">
    <property type="entry name" value="Glutathion_perox"/>
    <property type="match status" value="1"/>
</dbReference>
<dbReference type="SUPFAM" id="SSF52833">
    <property type="entry name" value="Thioredoxin-like"/>
    <property type="match status" value="1"/>
</dbReference>
<dbReference type="PROSITE" id="PS00460">
    <property type="entry name" value="GLUTATHIONE_PEROXID_1"/>
    <property type="match status" value="1"/>
</dbReference>
<dbReference type="PROSITE" id="PS00763">
    <property type="entry name" value="GLUTATHIONE_PEROXID_2"/>
    <property type="match status" value="1"/>
</dbReference>
<dbReference type="PROSITE" id="PS51355">
    <property type="entry name" value="GLUTATHIONE_PEROXID_3"/>
    <property type="match status" value="1"/>
</dbReference>
<feature type="transit peptide" description="Mitochondrion" evidence="5">
    <location>
        <begin position="1"/>
        <end status="unknown"/>
    </location>
</feature>
<feature type="chain" id="PRO_0000318641" description="Phospholipid hydroperoxide glutathione peroxidase">
    <location>
        <begin status="unknown"/>
        <end position="197"/>
    </location>
</feature>
<feature type="active site" evidence="1">
    <location>
        <position position="73"/>
    </location>
</feature>
<feature type="non-standard amino acid" description="Selenocysteine" evidence="1">
    <location>
        <position position="73"/>
    </location>
</feature>
<feature type="modified residue" description="Phosphoserine" evidence="4">
    <location>
        <position position="40"/>
    </location>
</feature>
<feature type="splice variant" id="VSP_031257" description="In isoform Cytoplasmic." evidence="7">
    <location>
        <begin position="1"/>
        <end position="27"/>
    </location>
</feature>
<name>GPX4_CALJA</name>
<sequence>MSLGRLCRLLKPALLCGALAAPGLAGTMCASQDDWRSARSMHEFSAKDIDGHTVNLDKYRGFVCIVTNVASQUGKTQVNYTQLVDLHARYAECGLRILAFPCNQFGKQEPGSNEEIKEFAAGYNVKFDMFSKICVNGDDAHPLWKWMKIQPKGKGTLGNAIKWNFTKFLVDKNGCVVKRYGPMEEPQVIEKDLPCYF</sequence>